<name>YESX_BACSU</name>
<sequence>MKPKKRQMEYLTRGLIAVQTEQGVFVSWRFLGTDHETTAFHLYRDGKRITRDPIAESTNFLDQNGTADSVYQVAAVNKGREEKLSKKARVWQENVLEVPLAKPEGGVTPDGKPYTYSANDASVGDIDGDGEYEMILKWDPSNSKDNAHDGYTGEVLIDAYKLDGTFLWRINLGRNIRAGAHYTQFMVYDLDGDGKAEIAMKTADGTTDGKGHIIGDEQADFRNEQGRILSGPEYLTVFKGETGEALTTVEYEPPRGKLEDWGDGYGNRMDRFLAGTAYLDGERPSLVMARGYYTRTVLVAYDFRNGRLKKRWVFDSNQPGHEAYAGQGNHSLSVADVDGDGKDEIIYGAMAVDHDGTGLYSTGLGHGDAMHVGDLDPSRKGLEVFQVHEDATKPYGLSLRDAGTGEILWGVHAGTDVGRGMAAHIDPSYKGSLVWGIDPPGNDGMSYGLFTSKGEKISDKAPSSANFAIWWDGDLVRELLDHDWDGTIGRPKIEKWDAENGCLKTIFQPAGVLSNNGTKGNPVLQANLFGDWREEVIWRTEDSSALRIYTTTHLTRHCFYTLMHDPVYRLGIAWQNTAYNQPPHTSFYLGTGMKKPPKPALYIAGSKAEAPL</sequence>
<protein>
    <recommendedName>
        <fullName>Rhamnogalacturonan exolyase YesX</fullName>
        <ecNumber evidence="2 3">4.2.2.24</ecNumber>
    </recommendedName>
</protein>
<accession>O31527</accession>
<evidence type="ECO:0000250" key="1">
    <source>
        <dbReference type="UniProtKB" id="O31526"/>
    </source>
</evidence>
<evidence type="ECO:0000269" key="2">
    <source>
    </source>
</evidence>
<evidence type="ECO:0000269" key="3">
    <source>
    </source>
</evidence>
<evidence type="ECO:0000303" key="4">
    <source>
    </source>
</evidence>
<evidence type="ECO:0000305" key="5"/>
<evidence type="ECO:0000305" key="6">
    <source>
    </source>
</evidence>
<evidence type="ECO:0007744" key="7">
    <source>
        <dbReference type="PDB" id="2ZUY"/>
    </source>
</evidence>
<evidence type="ECO:0007829" key="8">
    <source>
        <dbReference type="PDB" id="2ZUY"/>
    </source>
</evidence>
<organism>
    <name type="scientific">Bacillus subtilis (strain 168)</name>
    <dbReference type="NCBI Taxonomy" id="224308"/>
    <lineage>
        <taxon>Bacteria</taxon>
        <taxon>Bacillati</taxon>
        <taxon>Bacillota</taxon>
        <taxon>Bacilli</taxon>
        <taxon>Bacillales</taxon>
        <taxon>Bacillaceae</taxon>
        <taxon>Bacillus</taxon>
    </lineage>
</organism>
<proteinExistence type="evidence at protein level"/>
<reference key="1">
    <citation type="journal article" date="1997" name="Nature">
        <title>The complete genome sequence of the Gram-positive bacterium Bacillus subtilis.</title>
        <authorList>
            <person name="Kunst F."/>
            <person name="Ogasawara N."/>
            <person name="Moszer I."/>
            <person name="Albertini A.M."/>
            <person name="Alloni G."/>
            <person name="Azevedo V."/>
            <person name="Bertero M.G."/>
            <person name="Bessieres P."/>
            <person name="Bolotin A."/>
            <person name="Borchert S."/>
            <person name="Borriss R."/>
            <person name="Boursier L."/>
            <person name="Brans A."/>
            <person name="Braun M."/>
            <person name="Brignell S.C."/>
            <person name="Bron S."/>
            <person name="Brouillet S."/>
            <person name="Bruschi C.V."/>
            <person name="Caldwell B."/>
            <person name="Capuano V."/>
            <person name="Carter N.M."/>
            <person name="Choi S.-K."/>
            <person name="Codani J.-J."/>
            <person name="Connerton I.F."/>
            <person name="Cummings N.J."/>
            <person name="Daniel R.A."/>
            <person name="Denizot F."/>
            <person name="Devine K.M."/>
            <person name="Duesterhoeft A."/>
            <person name="Ehrlich S.D."/>
            <person name="Emmerson P.T."/>
            <person name="Entian K.-D."/>
            <person name="Errington J."/>
            <person name="Fabret C."/>
            <person name="Ferrari E."/>
            <person name="Foulger D."/>
            <person name="Fritz C."/>
            <person name="Fujita M."/>
            <person name="Fujita Y."/>
            <person name="Fuma S."/>
            <person name="Galizzi A."/>
            <person name="Galleron N."/>
            <person name="Ghim S.-Y."/>
            <person name="Glaser P."/>
            <person name="Goffeau A."/>
            <person name="Golightly E.J."/>
            <person name="Grandi G."/>
            <person name="Guiseppi G."/>
            <person name="Guy B.J."/>
            <person name="Haga K."/>
            <person name="Haiech J."/>
            <person name="Harwood C.R."/>
            <person name="Henaut A."/>
            <person name="Hilbert H."/>
            <person name="Holsappel S."/>
            <person name="Hosono S."/>
            <person name="Hullo M.-F."/>
            <person name="Itaya M."/>
            <person name="Jones L.-M."/>
            <person name="Joris B."/>
            <person name="Karamata D."/>
            <person name="Kasahara Y."/>
            <person name="Klaerr-Blanchard M."/>
            <person name="Klein C."/>
            <person name="Kobayashi Y."/>
            <person name="Koetter P."/>
            <person name="Koningstein G."/>
            <person name="Krogh S."/>
            <person name="Kumano M."/>
            <person name="Kurita K."/>
            <person name="Lapidus A."/>
            <person name="Lardinois S."/>
            <person name="Lauber J."/>
            <person name="Lazarevic V."/>
            <person name="Lee S.-M."/>
            <person name="Levine A."/>
            <person name="Liu H."/>
            <person name="Masuda S."/>
            <person name="Mauel C."/>
            <person name="Medigue C."/>
            <person name="Medina N."/>
            <person name="Mellado R.P."/>
            <person name="Mizuno M."/>
            <person name="Moestl D."/>
            <person name="Nakai S."/>
            <person name="Noback M."/>
            <person name="Noone D."/>
            <person name="O'Reilly M."/>
            <person name="Ogawa K."/>
            <person name="Ogiwara A."/>
            <person name="Oudega B."/>
            <person name="Park S.-H."/>
            <person name="Parro V."/>
            <person name="Pohl T.M."/>
            <person name="Portetelle D."/>
            <person name="Porwollik S."/>
            <person name="Prescott A.M."/>
            <person name="Presecan E."/>
            <person name="Pujic P."/>
            <person name="Purnelle B."/>
            <person name="Rapoport G."/>
            <person name="Rey M."/>
            <person name="Reynolds S."/>
            <person name="Rieger M."/>
            <person name="Rivolta C."/>
            <person name="Rocha E."/>
            <person name="Roche B."/>
            <person name="Rose M."/>
            <person name="Sadaie Y."/>
            <person name="Sato T."/>
            <person name="Scanlan E."/>
            <person name="Schleich S."/>
            <person name="Schroeter R."/>
            <person name="Scoffone F."/>
            <person name="Sekiguchi J."/>
            <person name="Sekowska A."/>
            <person name="Seror S.J."/>
            <person name="Serror P."/>
            <person name="Shin B.-S."/>
            <person name="Soldo B."/>
            <person name="Sorokin A."/>
            <person name="Tacconi E."/>
            <person name="Takagi T."/>
            <person name="Takahashi H."/>
            <person name="Takemaru K."/>
            <person name="Takeuchi M."/>
            <person name="Tamakoshi A."/>
            <person name="Tanaka T."/>
            <person name="Terpstra P."/>
            <person name="Tognoni A."/>
            <person name="Tosato V."/>
            <person name="Uchiyama S."/>
            <person name="Vandenbol M."/>
            <person name="Vannier F."/>
            <person name="Vassarotti A."/>
            <person name="Viari A."/>
            <person name="Wambutt R."/>
            <person name="Wedler E."/>
            <person name="Wedler H."/>
            <person name="Weitzenegger T."/>
            <person name="Winters P."/>
            <person name="Wipat A."/>
            <person name="Yamamoto H."/>
            <person name="Yamane K."/>
            <person name="Yasumoto K."/>
            <person name="Yata K."/>
            <person name="Yoshida K."/>
            <person name="Yoshikawa H.-F."/>
            <person name="Zumstein E."/>
            <person name="Yoshikawa H."/>
            <person name="Danchin A."/>
        </authorList>
    </citation>
    <scope>NUCLEOTIDE SEQUENCE [LARGE SCALE GENOMIC DNA]</scope>
    <source>
        <strain>168</strain>
    </source>
</reference>
<reference key="2">
    <citation type="journal article" date="2007" name="Appl. Environ. Microbiol.">
        <title>Plant cell wall degradation by saprophytic Bacillus subtilis strains: gene clusters responsible for rhamnogalacturonan depolymerization.</title>
        <authorList>
            <person name="Ochiai A."/>
            <person name="Itoh T."/>
            <person name="Kawamata A."/>
            <person name="Hashimoto W."/>
            <person name="Murata K."/>
        </authorList>
    </citation>
    <scope>PROTEIN SEQUENCE OF 1-6</scope>
    <scope>FUNCTION</scope>
    <scope>CATALYTIC ACTIVITY</scope>
    <scope>BIOPHYSICOCHEMICAL PROPERTIES</scope>
    <scope>COFACTOR</scope>
    <scope>SUBCELLULAR LOCATION</scope>
    <scope>INDUCTION</scope>
</reference>
<reference evidence="7" key="3">
    <citation type="journal article" date="2009" name="J. Biol. Chem.">
        <title>Structural determinants responsible for substrate recognition and mode of action in family 11 polysaccharide lyases.</title>
        <authorList>
            <person name="Ochiai A."/>
            <person name="Itoh T."/>
            <person name="Mikami B."/>
            <person name="Hashimoto W."/>
            <person name="Murata K."/>
        </authorList>
    </citation>
    <scope>X-RAY CRYSTALLOGRAPHY (1.65 ANGSTROMS) IN COMPLEX WITH CALCIUM</scope>
    <scope>FUNCTION</scope>
    <scope>CATALYTIC ACTIVITY</scope>
    <scope>COFACTOR</scope>
    <scope>BIOPHYSICOCHEMICAL PROPERTIES</scope>
    <scope>DELETION MUTAGENESIS OF 439-PRO--TYR-447</scope>
    <source>
        <strain evidence="4">168</strain>
    </source>
</reference>
<dbReference type="EC" id="4.2.2.24" evidence="2 3"/>
<dbReference type="EMBL" id="AL009126">
    <property type="protein sequence ID" value="CAB12525.1"/>
    <property type="molecule type" value="Genomic_DNA"/>
</dbReference>
<dbReference type="PIR" id="G69797">
    <property type="entry name" value="G69797"/>
</dbReference>
<dbReference type="PDB" id="2ZUY">
    <property type="method" value="X-ray"/>
    <property type="resolution" value="1.65 A"/>
    <property type="chains" value="A=1-612"/>
</dbReference>
<dbReference type="PDBsum" id="2ZUY"/>
<dbReference type="SMR" id="O31527"/>
<dbReference type="FunCoup" id="O31527">
    <property type="interactions" value="32"/>
</dbReference>
<dbReference type="STRING" id="224308.BSU07060"/>
<dbReference type="CAZy" id="PL11">
    <property type="family name" value="Polysaccharide Lyase Family 11"/>
</dbReference>
<dbReference type="PaxDb" id="224308-BSU07060"/>
<dbReference type="EnsemblBacteria" id="CAB12525">
    <property type="protein sequence ID" value="CAB12525"/>
    <property type="gene ID" value="BSU_07060"/>
</dbReference>
<dbReference type="GeneID" id="936081"/>
<dbReference type="KEGG" id="bsu:BSU07060"/>
<dbReference type="PATRIC" id="fig|224308.43.peg.744"/>
<dbReference type="eggNOG" id="COG3401">
    <property type="taxonomic scope" value="Bacteria"/>
</dbReference>
<dbReference type="InParanoid" id="O31527"/>
<dbReference type="OrthoDB" id="9802318at2"/>
<dbReference type="PhylomeDB" id="O31527"/>
<dbReference type="BioCyc" id="BSUB:BSU07060-MONOMER"/>
<dbReference type="BioCyc" id="MetaCyc:BSU07060-MONOMER"/>
<dbReference type="BRENDA" id="4.2.2.24">
    <property type="organism ID" value="658"/>
</dbReference>
<dbReference type="SABIO-RK" id="O31527"/>
<dbReference type="EvolutionaryTrace" id="O31527"/>
<dbReference type="Proteomes" id="UP000001570">
    <property type="component" value="Chromosome"/>
</dbReference>
<dbReference type="GO" id="GO:0005576">
    <property type="term" value="C:extracellular region"/>
    <property type="evidence" value="ECO:0007669"/>
    <property type="project" value="UniProtKB-SubCell"/>
</dbReference>
<dbReference type="GO" id="GO:0016829">
    <property type="term" value="F:lyase activity"/>
    <property type="evidence" value="ECO:0007669"/>
    <property type="project" value="UniProtKB-KW"/>
</dbReference>
<dbReference type="GO" id="GO:0046872">
    <property type="term" value="F:metal ion binding"/>
    <property type="evidence" value="ECO:0007669"/>
    <property type="project" value="UniProtKB-KW"/>
</dbReference>
<dbReference type="GO" id="GO:0071555">
    <property type="term" value="P:cell wall organization"/>
    <property type="evidence" value="ECO:0007669"/>
    <property type="project" value="UniProtKB-KW"/>
</dbReference>
<dbReference type="CDD" id="cd10318">
    <property type="entry name" value="RGL11"/>
    <property type="match status" value="1"/>
</dbReference>
<dbReference type="Gene3D" id="2.60.40.10">
    <property type="entry name" value="Immunoglobulins"/>
    <property type="match status" value="1"/>
</dbReference>
<dbReference type="InterPro" id="IPR013783">
    <property type="entry name" value="Ig-like_fold"/>
</dbReference>
<dbReference type="InterPro" id="IPR028994">
    <property type="entry name" value="Integrin_alpha_N"/>
</dbReference>
<dbReference type="InterPro" id="IPR041624">
    <property type="entry name" value="RGI_lyase"/>
</dbReference>
<dbReference type="InterPro" id="IPR034641">
    <property type="entry name" value="RGL11"/>
</dbReference>
<dbReference type="InterPro" id="IPR049366">
    <property type="entry name" value="RGL11_C"/>
</dbReference>
<dbReference type="PANTHER" id="PTHR43118">
    <property type="entry name" value="RHAMNOGALACTURONAN LYASE (EUROFUNG)"/>
    <property type="match status" value="1"/>
</dbReference>
<dbReference type="PANTHER" id="PTHR43118:SF1">
    <property type="entry name" value="RHAMNOGALACTURONAN LYASE (EUROFUNG)"/>
    <property type="match status" value="1"/>
</dbReference>
<dbReference type="Pfam" id="PF18370">
    <property type="entry name" value="RGI_lyase"/>
    <property type="match status" value="1"/>
</dbReference>
<dbReference type="Pfam" id="PF21348">
    <property type="entry name" value="RGL11_C"/>
    <property type="match status" value="1"/>
</dbReference>
<dbReference type="SUPFAM" id="SSF69318">
    <property type="entry name" value="Integrin alpha N-terminal domain"/>
    <property type="match status" value="1"/>
</dbReference>
<comment type="function">
    <text evidence="2 3">Pectinolytic enzyme that degrades type I rhamnogalacturonan from plant cell walls and releases disaccharide products (PubMed:17449691, PubMed:19193638). Degrades rhamnogalacturonan, polygalacturonic acid and pectic acid. Has very low activity on pectin (PubMed:17449691).</text>
</comment>
<comment type="catalytic activity">
    <reaction evidence="2 3">
        <text>Exotype eliminative cleavage of alpha-L-rhamnopyranosyl-(1-&gt;4)-alpha-D-galactopyranosyluronic acid bonds of rhamnogalacturonan I oligosaccharides containing alpha-L-rhamnopyranose at the reducing end and 4-deoxy-4,5-unsaturated D-galactopyranosyluronic acid at the non-reducing end. The products are the disaccharide 2-O-(4-deoxy-beta-L-threo-hex-4-enopyranuronosyl)-alpha-L-rhamnopyranose and the shortened rhamnogalacturonan oligosaccharide containing one 4-deoxy-4,5-unsaturated D-galactopyranosyluronic acid at the non-reducing end.</text>
        <dbReference type="EC" id="4.2.2.24"/>
    </reaction>
</comment>
<comment type="cofactor">
    <cofactor evidence="2">
        <name>Mn(2+)</name>
        <dbReference type="ChEBI" id="CHEBI:29035"/>
    </cofactor>
    <cofactor evidence="2">
        <name>Zn(2+)</name>
        <dbReference type="ChEBI" id="CHEBI:29105"/>
    </cofactor>
    <cofactor evidence="2">
        <name>Co(2+)</name>
        <dbReference type="ChEBI" id="CHEBI:48828"/>
    </cofactor>
    <text evidence="2">Divalent metal cations. Has highest activity with Mn(2+), followed by Zn(2+) and Co(2+).</text>
</comment>
<comment type="cofactor">
    <cofactor evidence="2 3">
        <name>Ca(2+)</name>
        <dbReference type="ChEBI" id="CHEBI:29108"/>
    </cofactor>
    <text evidence="2">Binds 10 calcium ions. The calcium may have a structural role.</text>
</comment>
<comment type="biophysicochemical properties">
    <kinetics>
        <KM evidence="3">1.78 mg/ml for rhamnogalacturonan (RG) type I region of plant cell wall pectin</KM>
    </kinetics>
    <phDependence>
        <text evidence="2">Optimum pH is 8.5.</text>
    </phDependence>
    <temperatureDependence>
        <text evidence="2">Optimum temperature is 60 degrees Celsius.</text>
    </temperatureDependence>
</comment>
<comment type="subunit">
    <text>Monomer.</text>
</comment>
<comment type="subcellular location">
    <subcellularLocation>
        <location evidence="6">Secreted</location>
    </subcellularLocation>
</comment>
<comment type="induction">
    <text evidence="2">Up-regulated by growth on type I rhamnogalacturonan.</text>
</comment>
<comment type="similarity">
    <text evidence="5">Belongs to the polysaccharide lyase 11 family.</text>
</comment>
<comment type="caution">
    <text evidence="5">This enzyme is expected to be secreted, but there is no predicted signal sequence.</text>
</comment>
<keyword id="KW-0002">3D-structure</keyword>
<keyword id="KW-0106">Calcium</keyword>
<keyword id="KW-0961">Cell wall biogenesis/degradation</keyword>
<keyword id="KW-0903">Direct protein sequencing</keyword>
<keyword id="KW-0456">Lyase</keyword>
<keyword id="KW-0479">Metal-binding</keyword>
<keyword id="KW-1185">Reference proteome</keyword>
<keyword id="KW-0677">Repeat</keyword>
<keyword id="KW-0964">Secreted</keyword>
<gene>
    <name type="primary">yesX</name>
    <name type="ordered locus">BSU07060</name>
</gene>
<feature type="chain" id="PRO_0000360213" description="Rhamnogalacturonan exolyase YesX">
    <location>
        <begin position="1"/>
        <end position="612"/>
    </location>
</feature>
<feature type="binding site" evidence="1">
    <location>
        <position position="119"/>
    </location>
    <ligand>
        <name>substrate</name>
    </ligand>
</feature>
<feature type="binding site" evidence="3 7">
    <location>
        <position position="120"/>
    </location>
    <ligand>
        <name>Ca(2+)</name>
        <dbReference type="ChEBI" id="CHEBI:29108"/>
        <label>1</label>
    </ligand>
</feature>
<feature type="binding site" evidence="3 7">
    <location>
        <position position="125"/>
    </location>
    <ligand>
        <name>Ca(2+)</name>
        <dbReference type="ChEBI" id="CHEBI:29108"/>
        <label>2</label>
    </ligand>
</feature>
<feature type="binding site" evidence="3 7">
    <location>
        <position position="127"/>
    </location>
    <ligand>
        <name>Ca(2+)</name>
        <dbReference type="ChEBI" id="CHEBI:29108"/>
        <label>2</label>
    </ligand>
</feature>
<feature type="binding site" evidence="3 7">
    <location>
        <position position="129"/>
    </location>
    <ligand>
        <name>Ca(2+)</name>
        <dbReference type="ChEBI" id="CHEBI:29108"/>
        <label>2</label>
    </ligand>
</feature>
<feature type="binding site" evidence="3 7">
    <location>
        <position position="131"/>
    </location>
    <ligand>
        <name>Ca(2+)</name>
        <dbReference type="ChEBI" id="CHEBI:29108"/>
        <label>2</label>
    </ligand>
</feature>
<feature type="binding site" evidence="3 7">
    <location>
        <position position="133"/>
    </location>
    <ligand>
        <name>Ca(2+)</name>
        <dbReference type="ChEBI" id="CHEBI:29108"/>
        <label>2</label>
    </ligand>
</feature>
<feature type="binding site" evidence="1">
    <location>
        <position position="139"/>
    </location>
    <ligand>
        <name>substrate</name>
    </ligand>
</feature>
<feature type="binding site" evidence="1">
    <location>
        <position position="154"/>
    </location>
    <ligand>
        <name>substrate</name>
    </ligand>
</feature>
<feature type="binding site" evidence="1">
    <location>
        <position position="174"/>
    </location>
    <ligand>
        <name>substrate</name>
    </ligand>
</feature>
<feature type="binding site" evidence="3 7">
    <location>
        <position position="189"/>
    </location>
    <ligand>
        <name>Ca(2+)</name>
        <dbReference type="ChEBI" id="CHEBI:29108"/>
        <label>3</label>
    </ligand>
</feature>
<feature type="binding site" evidence="3 7">
    <location>
        <position position="191"/>
    </location>
    <ligand>
        <name>Ca(2+)</name>
        <dbReference type="ChEBI" id="CHEBI:29108"/>
        <label>3</label>
    </ligand>
</feature>
<feature type="binding site" evidence="3 7">
    <location>
        <position position="193"/>
    </location>
    <ligand>
        <name>Ca(2+)</name>
        <dbReference type="ChEBI" id="CHEBI:29108"/>
        <label>3</label>
    </ligand>
</feature>
<feature type="binding site" evidence="3 7">
    <location>
        <position position="195"/>
    </location>
    <ligand>
        <name>Ca(2+)</name>
        <dbReference type="ChEBI" id="CHEBI:29108"/>
        <label>3</label>
    </ligand>
</feature>
<feature type="binding site" evidence="3 7">
    <location>
        <position position="197"/>
    </location>
    <ligand>
        <name>Ca(2+)</name>
        <dbReference type="ChEBI" id="CHEBI:29108"/>
        <label>3</label>
    </ligand>
</feature>
<feature type="binding site" evidence="1">
    <location>
        <position position="205"/>
    </location>
    <ligand>
        <name>substrate</name>
    </ligand>
</feature>
<feature type="binding site" evidence="1">
    <location>
        <position position="222"/>
    </location>
    <ligand>
        <name>substrate</name>
    </ligand>
</feature>
<feature type="binding site" evidence="3 7">
    <location>
        <position position="330"/>
    </location>
    <ligand>
        <name>Ca(2+)</name>
        <dbReference type="ChEBI" id="CHEBI:29108"/>
        <label>4</label>
    </ligand>
</feature>
<feature type="binding site" evidence="3 7">
    <location>
        <position position="336"/>
    </location>
    <ligand>
        <name>Ca(2+)</name>
        <dbReference type="ChEBI" id="CHEBI:29108"/>
        <label>5</label>
    </ligand>
</feature>
<feature type="binding site" evidence="3 7">
    <location>
        <position position="338"/>
    </location>
    <ligand>
        <name>Ca(2+)</name>
        <dbReference type="ChEBI" id="CHEBI:29108"/>
        <label>5</label>
    </ligand>
</feature>
<feature type="binding site" evidence="3 7">
    <location>
        <position position="338"/>
    </location>
    <ligand>
        <name>Ca(2+)</name>
        <dbReference type="ChEBI" id="CHEBI:29108"/>
        <label>6</label>
    </ligand>
</feature>
<feature type="binding site" evidence="3 7">
    <location>
        <position position="340"/>
    </location>
    <ligand>
        <name>Ca(2+)</name>
        <dbReference type="ChEBI" id="CHEBI:29108"/>
        <label>5</label>
    </ligand>
</feature>
<feature type="binding site" evidence="3 7">
    <location>
        <position position="340"/>
    </location>
    <ligand>
        <name>Ca(2+)</name>
        <dbReference type="ChEBI" id="CHEBI:29108"/>
        <label>6</label>
    </ligand>
</feature>
<feature type="binding site" evidence="3 7">
    <location>
        <position position="342"/>
    </location>
    <ligand>
        <name>Ca(2+)</name>
        <dbReference type="ChEBI" id="CHEBI:29108"/>
        <label>5</label>
    </ligand>
</feature>
<feature type="binding site" evidence="3 7">
    <location>
        <position position="344"/>
    </location>
    <ligand>
        <name>Ca(2+)</name>
        <dbReference type="ChEBI" id="CHEBI:29108"/>
        <label>5</label>
    </ligand>
</feature>
<feature type="binding site" evidence="3 7">
    <location>
        <position position="344"/>
    </location>
    <ligand>
        <name>Ca(2+)</name>
        <dbReference type="ChEBI" id="CHEBI:29108"/>
        <label>6</label>
    </ligand>
</feature>
<feature type="binding site" evidence="3 7">
    <location>
        <position position="353"/>
    </location>
    <ligand>
        <name>Ca(2+)</name>
        <dbReference type="ChEBI" id="CHEBI:29108"/>
        <label>6</label>
    </ligand>
</feature>
<feature type="binding site" evidence="3 7">
    <location>
        <position position="354"/>
    </location>
    <ligand>
        <name>Ca(2+)</name>
        <dbReference type="ChEBI" id="CHEBI:29108"/>
        <label>6</label>
    </ligand>
</feature>
<feature type="binding site" evidence="3 7">
    <location>
        <position position="366"/>
    </location>
    <ligand>
        <name>Ca(2+)</name>
        <dbReference type="ChEBI" id="CHEBI:29108"/>
        <label>4</label>
    </ligand>
</feature>
<feature type="binding site" evidence="3 7">
    <location>
        <position position="368"/>
    </location>
    <ligand>
        <name>Ca(2+)</name>
        <dbReference type="ChEBI" id="CHEBI:29108"/>
        <label>4</label>
    </ligand>
</feature>
<feature type="binding site" evidence="3 7">
    <location>
        <position position="374"/>
    </location>
    <ligand>
        <name>Ca(2+)</name>
        <dbReference type="ChEBI" id="CHEBI:29108"/>
        <label>7</label>
    </ligand>
</feature>
<feature type="binding site" evidence="3 7">
    <location>
        <position position="376"/>
    </location>
    <ligand>
        <name>Ca(2+)</name>
        <dbReference type="ChEBI" id="CHEBI:29108"/>
        <label>7</label>
    </ligand>
</feature>
<feature type="binding site" evidence="3 7">
    <location>
        <position position="379"/>
    </location>
    <ligand>
        <name>Ca(2+)</name>
        <dbReference type="ChEBI" id="CHEBI:29108"/>
        <label>7</label>
    </ligand>
</feature>
<feature type="binding site" evidence="3 7">
    <location>
        <position position="381"/>
    </location>
    <ligand>
        <name>Ca(2+)</name>
        <dbReference type="ChEBI" id="CHEBI:29108"/>
        <label>7</label>
    </ligand>
</feature>
<feature type="binding site" evidence="3 7">
    <location>
        <position position="383"/>
    </location>
    <ligand>
        <name>Ca(2+)</name>
        <dbReference type="ChEBI" id="CHEBI:29108"/>
        <label>7</label>
    </ligand>
</feature>
<feature type="binding site" evidence="3 7">
    <location>
        <position position="389"/>
    </location>
    <ligand>
        <name>Ca(2+)</name>
        <dbReference type="ChEBI" id="CHEBI:29108"/>
        <label>4</label>
    </ligand>
</feature>
<feature type="binding site" evidence="1">
    <location>
        <position position="419"/>
    </location>
    <ligand>
        <name>substrate</name>
    </ligand>
</feature>
<feature type="binding site" evidence="3 7">
    <location>
        <position position="472"/>
    </location>
    <ligand>
        <name>Ca(2+)</name>
        <dbReference type="ChEBI" id="CHEBI:29108"/>
        <label>8</label>
    </ligand>
</feature>
<feature type="binding site" evidence="3 7">
    <location>
        <position position="474"/>
    </location>
    <ligand>
        <name>Ca(2+)</name>
        <dbReference type="ChEBI" id="CHEBI:29108"/>
        <label>8</label>
    </ligand>
</feature>
<feature type="binding site" evidence="3 7">
    <location>
        <position position="476"/>
    </location>
    <ligand>
        <name>Ca(2+)</name>
        <dbReference type="ChEBI" id="CHEBI:29108"/>
        <label>8</label>
    </ligand>
</feature>
<feature type="binding site" evidence="3 7">
    <location>
        <position position="478"/>
    </location>
    <ligand>
        <name>Ca(2+)</name>
        <dbReference type="ChEBI" id="CHEBI:29108"/>
        <label>8</label>
    </ligand>
</feature>
<feature type="binding site" evidence="1">
    <location>
        <begin position="516"/>
        <end position="518"/>
    </location>
    <ligand>
        <name>substrate</name>
    </ligand>
</feature>
<feature type="binding site" evidence="1">
    <location>
        <position position="527"/>
    </location>
    <ligand>
        <name>Ca(2+)</name>
        <dbReference type="ChEBI" id="CHEBI:29108"/>
        <label>10</label>
    </ligand>
</feature>
<feature type="binding site" evidence="1">
    <location>
        <position position="529"/>
    </location>
    <ligand>
        <name>Ca(2+)</name>
        <dbReference type="ChEBI" id="CHEBI:29108"/>
        <label>10</label>
    </ligand>
</feature>
<feature type="binding site" evidence="3 7">
    <location>
        <position position="529"/>
    </location>
    <ligand>
        <name>Ca(2+)</name>
        <dbReference type="ChEBI" id="CHEBI:29108"/>
        <label>9</label>
    </ligand>
</feature>
<feature type="binding site" evidence="1">
    <location>
        <position position="531"/>
    </location>
    <ligand>
        <name>Ca(2+)</name>
        <dbReference type="ChEBI" id="CHEBI:29108"/>
        <label>10</label>
    </ligand>
</feature>
<feature type="binding site" evidence="3 7">
    <location>
        <position position="531"/>
    </location>
    <ligand>
        <name>Ca(2+)</name>
        <dbReference type="ChEBI" id="CHEBI:29108"/>
        <label>9</label>
    </ligand>
</feature>
<feature type="binding site" evidence="1">
    <location>
        <position position="533"/>
    </location>
    <ligand>
        <name>Ca(2+)</name>
        <dbReference type="ChEBI" id="CHEBI:29108"/>
        <label>10</label>
    </ligand>
</feature>
<feature type="binding site" evidence="3 7">
    <location>
        <position position="533"/>
    </location>
    <ligand>
        <name>Ca(2+)</name>
        <dbReference type="ChEBI" id="CHEBI:29108"/>
        <label>9</label>
    </ligand>
</feature>
<feature type="binding site" evidence="1">
    <location>
        <position position="535"/>
    </location>
    <ligand>
        <name>Ca(2+)</name>
        <dbReference type="ChEBI" id="CHEBI:29108"/>
        <label>10</label>
    </ligand>
</feature>
<feature type="binding site" evidence="3 7">
    <location>
        <position position="535"/>
    </location>
    <ligand>
        <name>Ca(2+)</name>
        <dbReference type="ChEBI" id="CHEBI:29108"/>
        <label>9</label>
    </ligand>
</feature>
<feature type="binding site" evidence="3 7">
    <location>
        <position position="576"/>
    </location>
    <ligand>
        <name>Ca(2+)</name>
        <dbReference type="ChEBI" id="CHEBI:29108"/>
        <label>1</label>
    </ligand>
</feature>
<feature type="binding site" evidence="3 7">
    <location>
        <position position="578"/>
    </location>
    <ligand>
        <name>Ca(2+)</name>
        <dbReference type="ChEBI" id="CHEBI:29108"/>
        <label>1</label>
    </ligand>
</feature>
<feature type="binding site" evidence="1">
    <location>
        <position position="579"/>
    </location>
    <ligand>
        <name>substrate</name>
    </ligand>
</feature>
<feature type="binding site" evidence="3 7">
    <location>
        <position position="580"/>
    </location>
    <ligand>
        <name>Ca(2+)</name>
        <dbReference type="ChEBI" id="CHEBI:29108"/>
        <label>1</label>
    </ligand>
</feature>
<feature type="mutagenesis site" description="Changes the activity from exo- to endo-cleavage." evidence="3">
    <location>
        <begin position="439"/>
        <end position="447"/>
    </location>
</feature>
<feature type="strand" evidence="8">
    <location>
        <begin position="6"/>
        <end position="8"/>
    </location>
</feature>
<feature type="strand" evidence="8">
    <location>
        <begin position="16"/>
        <end position="20"/>
    </location>
</feature>
<feature type="strand" evidence="8">
    <location>
        <begin position="23"/>
        <end position="27"/>
    </location>
</feature>
<feature type="strand" evidence="8">
    <location>
        <begin position="39"/>
        <end position="44"/>
    </location>
</feature>
<feature type="strand" evidence="8">
    <location>
        <begin position="58"/>
        <end position="62"/>
    </location>
</feature>
<feature type="strand" evidence="8">
    <location>
        <begin position="70"/>
        <end position="77"/>
    </location>
</feature>
<feature type="strand" evidence="8">
    <location>
        <begin position="88"/>
        <end position="99"/>
    </location>
</feature>
<feature type="strand" evidence="8">
    <location>
        <begin position="116"/>
        <end position="124"/>
    </location>
</feature>
<feature type="strand" evidence="8">
    <location>
        <begin position="126"/>
        <end position="131"/>
    </location>
</feature>
<feature type="strand" evidence="8">
    <location>
        <begin position="133"/>
        <end position="140"/>
    </location>
</feature>
<feature type="strand" evidence="8">
    <location>
        <begin position="156"/>
        <end position="160"/>
    </location>
</feature>
<feature type="strand" evidence="8">
    <location>
        <begin position="166"/>
        <end position="171"/>
    </location>
</feature>
<feature type="strand" evidence="8">
    <location>
        <begin position="186"/>
        <end position="188"/>
    </location>
</feature>
<feature type="strand" evidence="8">
    <location>
        <begin position="190"/>
        <end position="195"/>
    </location>
</feature>
<feature type="strand" evidence="8">
    <location>
        <begin position="197"/>
        <end position="202"/>
    </location>
</feature>
<feature type="strand" evidence="8">
    <location>
        <begin position="234"/>
        <end position="239"/>
    </location>
</feature>
<feature type="turn" evidence="8">
    <location>
        <begin position="240"/>
        <end position="242"/>
    </location>
</feature>
<feature type="strand" evidence="8">
    <location>
        <begin position="245"/>
        <end position="250"/>
    </location>
</feature>
<feature type="helix" evidence="8">
    <location>
        <begin position="258"/>
        <end position="261"/>
    </location>
</feature>
<feature type="strand" evidence="8">
    <location>
        <begin position="263"/>
        <end position="266"/>
    </location>
</feature>
<feature type="turn" evidence="8">
    <location>
        <begin position="267"/>
        <end position="270"/>
    </location>
</feature>
<feature type="strand" evidence="8">
    <location>
        <begin position="272"/>
        <end position="277"/>
    </location>
</feature>
<feature type="strand" evidence="8">
    <location>
        <begin position="281"/>
        <end position="283"/>
    </location>
</feature>
<feature type="strand" evidence="8">
    <location>
        <begin position="285"/>
        <end position="290"/>
    </location>
</feature>
<feature type="strand" evidence="8">
    <location>
        <begin position="292"/>
        <end position="295"/>
    </location>
</feature>
<feature type="strand" evidence="8">
    <location>
        <begin position="297"/>
        <end position="304"/>
    </location>
</feature>
<feature type="strand" evidence="8">
    <location>
        <begin position="307"/>
        <end position="315"/>
    </location>
</feature>
<feature type="helix" evidence="8">
    <location>
        <begin position="322"/>
        <end position="324"/>
    </location>
</feature>
<feature type="strand" evidence="8">
    <location>
        <begin position="333"/>
        <end position="335"/>
    </location>
</feature>
<feature type="strand" evidence="8">
    <location>
        <begin position="338"/>
        <end position="342"/>
    </location>
</feature>
<feature type="strand" evidence="8">
    <location>
        <begin position="344"/>
        <end position="347"/>
    </location>
</feature>
<feature type="strand" evidence="8">
    <location>
        <begin position="350"/>
        <end position="352"/>
    </location>
</feature>
<feature type="strand" evidence="8">
    <location>
        <begin position="356"/>
        <end position="361"/>
    </location>
</feature>
<feature type="strand" evidence="8">
    <location>
        <begin position="370"/>
        <end position="373"/>
    </location>
</feature>
<feature type="strand" evidence="8">
    <location>
        <begin position="379"/>
        <end position="381"/>
    </location>
</feature>
<feature type="strand" evidence="8">
    <location>
        <begin position="383"/>
        <end position="387"/>
    </location>
</feature>
<feature type="strand" evidence="8">
    <location>
        <begin position="396"/>
        <end position="401"/>
    </location>
</feature>
<feature type="turn" evidence="8">
    <location>
        <begin position="402"/>
        <end position="404"/>
    </location>
</feature>
<feature type="strand" evidence="8">
    <location>
        <begin position="407"/>
        <end position="411"/>
    </location>
</feature>
<feature type="strand" evidence="8">
    <location>
        <begin position="419"/>
        <end position="423"/>
    </location>
</feature>
<feature type="strand" evidence="8">
    <location>
        <begin position="429"/>
        <end position="431"/>
    </location>
</feature>
<feature type="strand" evidence="8">
    <location>
        <begin position="433"/>
        <end position="437"/>
    </location>
</feature>
<feature type="strand" evidence="8">
    <location>
        <begin position="446"/>
        <end position="451"/>
    </location>
</feature>
<feature type="strand" evidence="8">
    <location>
        <begin position="456"/>
        <end position="460"/>
    </location>
</feature>
<feature type="strand" evidence="8">
    <location>
        <begin position="466"/>
        <end position="469"/>
    </location>
</feature>
<feature type="strand" evidence="8">
    <location>
        <begin position="472"/>
        <end position="476"/>
    </location>
</feature>
<feature type="strand" evidence="8">
    <location>
        <begin position="478"/>
        <end position="484"/>
    </location>
</feature>
<feature type="strand" evidence="8">
    <location>
        <begin position="489"/>
        <end position="497"/>
    </location>
</feature>
<feature type="turn" evidence="8">
    <location>
        <begin position="498"/>
        <end position="501"/>
    </location>
</feature>
<feature type="strand" evidence="8">
    <location>
        <begin position="502"/>
        <end position="507"/>
    </location>
</feature>
<feature type="helix" evidence="8">
    <location>
        <begin position="517"/>
        <end position="519"/>
    </location>
</feature>
<feature type="strand" evidence="8">
    <location>
        <begin position="523"/>
        <end position="526"/>
    </location>
</feature>
<feature type="strand" evidence="8">
    <location>
        <begin position="529"/>
        <end position="533"/>
    </location>
</feature>
<feature type="strand" evidence="8">
    <location>
        <begin position="535"/>
        <end position="540"/>
    </location>
</feature>
<feature type="strand" evidence="8">
    <location>
        <begin position="543"/>
        <end position="549"/>
    </location>
</feature>
<feature type="helix" evidence="8">
    <location>
        <begin position="562"/>
        <end position="564"/>
    </location>
</feature>
<feature type="helix" evidence="8">
    <location>
        <begin position="568"/>
        <end position="574"/>
    </location>
</feature>
<feature type="strand" evidence="8">
    <location>
        <begin position="577"/>
        <end position="579"/>
    </location>
</feature>
<feature type="strand" evidence="8">
    <location>
        <begin position="601"/>
        <end position="603"/>
    </location>
</feature>